<comment type="function">
    <text evidence="1">Catalyzes the specific phosphorylation of arginine residues in proteins.</text>
</comment>
<comment type="catalytic activity">
    <reaction evidence="1">
        <text>L-arginyl-[protein] + ATP = N(omega)-phospho-L-arginyl-[protein] + ADP + H(+)</text>
        <dbReference type="Rhea" id="RHEA:43384"/>
        <dbReference type="Rhea" id="RHEA-COMP:10532"/>
        <dbReference type="Rhea" id="RHEA-COMP:10533"/>
        <dbReference type="ChEBI" id="CHEBI:15378"/>
        <dbReference type="ChEBI" id="CHEBI:29965"/>
        <dbReference type="ChEBI" id="CHEBI:30616"/>
        <dbReference type="ChEBI" id="CHEBI:83226"/>
        <dbReference type="ChEBI" id="CHEBI:456216"/>
        <dbReference type="EC" id="2.7.14.1"/>
    </reaction>
</comment>
<comment type="activity regulation">
    <text evidence="1">Appears to be allosterically activated by the binding of pArg-containing polypeptides to the pArg-binding pocket localized in the C-terminal domain of McsB.</text>
</comment>
<comment type="similarity">
    <text evidence="1">Belongs to the ATP:guanido phosphotransferase family.</text>
</comment>
<keyword id="KW-0021">Allosteric enzyme</keyword>
<keyword id="KW-0067">ATP-binding</keyword>
<keyword id="KW-0418">Kinase</keyword>
<keyword id="KW-0547">Nucleotide-binding</keyword>
<keyword id="KW-1185">Reference proteome</keyword>
<keyword id="KW-0808">Transferase</keyword>
<accession>Q0AUE7</accession>
<dbReference type="EC" id="2.7.14.1" evidence="1"/>
<dbReference type="EMBL" id="CP000448">
    <property type="protein sequence ID" value="ABI69657.1"/>
    <property type="molecule type" value="Genomic_DNA"/>
</dbReference>
<dbReference type="RefSeq" id="WP_011641741.1">
    <property type="nucleotide sequence ID" value="NC_008346.1"/>
</dbReference>
<dbReference type="SMR" id="Q0AUE7"/>
<dbReference type="STRING" id="335541.Swol_2368"/>
<dbReference type="KEGG" id="swo:Swol_2368"/>
<dbReference type="eggNOG" id="COG3869">
    <property type="taxonomic scope" value="Bacteria"/>
</dbReference>
<dbReference type="HOGENOM" id="CLU_066591_1_0_9"/>
<dbReference type="OrthoDB" id="9791353at2"/>
<dbReference type="Proteomes" id="UP000001968">
    <property type="component" value="Chromosome"/>
</dbReference>
<dbReference type="GO" id="GO:0005615">
    <property type="term" value="C:extracellular space"/>
    <property type="evidence" value="ECO:0007669"/>
    <property type="project" value="TreeGrafter"/>
</dbReference>
<dbReference type="GO" id="GO:0005524">
    <property type="term" value="F:ATP binding"/>
    <property type="evidence" value="ECO:0007669"/>
    <property type="project" value="UniProtKB-KW"/>
</dbReference>
<dbReference type="GO" id="GO:0004111">
    <property type="term" value="F:creatine kinase activity"/>
    <property type="evidence" value="ECO:0007669"/>
    <property type="project" value="InterPro"/>
</dbReference>
<dbReference type="GO" id="GO:0004672">
    <property type="term" value="F:protein kinase activity"/>
    <property type="evidence" value="ECO:0007669"/>
    <property type="project" value="UniProtKB-UniRule"/>
</dbReference>
<dbReference type="GO" id="GO:0046314">
    <property type="term" value="P:phosphocreatine biosynthetic process"/>
    <property type="evidence" value="ECO:0007669"/>
    <property type="project" value="InterPro"/>
</dbReference>
<dbReference type="CDD" id="cd07930">
    <property type="entry name" value="bacterial_phosphagen_kinase"/>
    <property type="match status" value="1"/>
</dbReference>
<dbReference type="Gene3D" id="3.30.590.10">
    <property type="entry name" value="Glutamine synthetase/guanido kinase, catalytic domain"/>
    <property type="match status" value="1"/>
</dbReference>
<dbReference type="HAMAP" id="MF_00602">
    <property type="entry name" value="Prot_Arg_kinase"/>
    <property type="match status" value="1"/>
</dbReference>
<dbReference type="InterPro" id="IPR023660">
    <property type="entry name" value="Arg_Kinase"/>
</dbReference>
<dbReference type="InterPro" id="IPR000749">
    <property type="entry name" value="ATP-guanido_PTrfase"/>
</dbReference>
<dbReference type="InterPro" id="IPR022415">
    <property type="entry name" value="ATP-guanido_PTrfase_AS"/>
</dbReference>
<dbReference type="InterPro" id="IPR022414">
    <property type="entry name" value="ATP-guanido_PTrfase_cat"/>
</dbReference>
<dbReference type="InterPro" id="IPR014746">
    <property type="entry name" value="Gln_synth/guanido_kin_cat_dom"/>
</dbReference>
<dbReference type="NCBIfam" id="NF002194">
    <property type="entry name" value="PRK01059.1-4"/>
    <property type="match status" value="1"/>
</dbReference>
<dbReference type="PANTHER" id="PTHR11547:SF38">
    <property type="entry name" value="ARGININE KINASE 1-RELATED"/>
    <property type="match status" value="1"/>
</dbReference>
<dbReference type="PANTHER" id="PTHR11547">
    <property type="entry name" value="ARGININE OR CREATINE KINASE"/>
    <property type="match status" value="1"/>
</dbReference>
<dbReference type="Pfam" id="PF00217">
    <property type="entry name" value="ATP-gua_Ptrans"/>
    <property type="match status" value="1"/>
</dbReference>
<dbReference type="SUPFAM" id="SSF55931">
    <property type="entry name" value="Glutamine synthetase/guanido kinase"/>
    <property type="match status" value="1"/>
</dbReference>
<dbReference type="PROSITE" id="PS00112">
    <property type="entry name" value="PHOSPHAGEN_KINASE"/>
    <property type="match status" value="1"/>
</dbReference>
<dbReference type="PROSITE" id="PS51510">
    <property type="entry name" value="PHOSPHAGEN_KINASE_C"/>
    <property type="match status" value="1"/>
</dbReference>
<protein>
    <recommendedName>
        <fullName evidence="1">Protein-arginine kinase</fullName>
        <ecNumber evidence="1">2.7.14.1</ecNumber>
    </recommendedName>
</protein>
<name>MCSB_SYNWW</name>
<organism>
    <name type="scientific">Syntrophomonas wolfei subsp. wolfei (strain DSM 2245B / Goettingen)</name>
    <dbReference type="NCBI Taxonomy" id="335541"/>
    <lineage>
        <taxon>Bacteria</taxon>
        <taxon>Bacillati</taxon>
        <taxon>Bacillota</taxon>
        <taxon>Clostridia</taxon>
        <taxon>Eubacteriales</taxon>
        <taxon>Syntrophomonadaceae</taxon>
        <taxon>Syntrophomonas</taxon>
    </lineage>
</organism>
<proteinExistence type="inferred from homology"/>
<sequence length="359" mass="40395">MSIKKLFAETFLAWMNGETASQSDIVISSRVRLARNLSDIAFPHLLNQESGQKFMQLIYEAWQKSEFKELKQMELVTFENLSALDRKILVEKHLISPNHAQSTAFYQGLLVKPDGSLAVMINEEDHLRIQCFLPGLQLEEAYRRAQEIDDALEKELDFAFDDRRGYLTSCPTNIGTGMRASLMLHLPAITISGQSGHIFQNLNQLGLTVRGIYGEGTEAIGNFFQLSNQITLGQSEEDINASLTTISQQVIEQERMLRKSLREQMKYQLEDRIGRAYGILTHARLISSNEALTLLSDVRLGVDMGMIPRISPNALNELVVDIRPAHLQKKAGSDMDAVSRDAKRAEVIREKLQTGEEGS</sequence>
<gene>
    <name evidence="1" type="primary">mcsB</name>
    <name type="ordered locus">Swol_2368</name>
</gene>
<feature type="chain" id="PRO_1000025881" description="Protein-arginine kinase">
    <location>
        <begin position="1"/>
        <end position="359"/>
    </location>
</feature>
<feature type="domain" description="Phosphagen kinase C-terminal" evidence="1">
    <location>
        <begin position="25"/>
        <end position="257"/>
    </location>
</feature>
<feature type="short sequence motif" description="RDXXRA motif of the pArg binding pocket involved in allosteric regulation" evidence="1">
    <location>
        <begin position="340"/>
        <end position="345"/>
    </location>
</feature>
<feature type="binding site" evidence="1">
    <location>
        <begin position="28"/>
        <end position="32"/>
    </location>
    <ligand>
        <name>ATP</name>
        <dbReference type="ChEBI" id="CHEBI:30616"/>
    </ligand>
</feature>
<feature type="binding site" evidence="1">
    <location>
        <position position="93"/>
    </location>
    <ligand>
        <name>ATP</name>
        <dbReference type="ChEBI" id="CHEBI:30616"/>
    </ligand>
</feature>
<feature type="binding site" evidence="1">
    <location>
        <position position="128"/>
    </location>
    <ligand>
        <name>ATP</name>
        <dbReference type="ChEBI" id="CHEBI:30616"/>
    </ligand>
</feature>
<feature type="binding site" evidence="1">
    <location>
        <begin position="179"/>
        <end position="183"/>
    </location>
    <ligand>
        <name>ATP</name>
        <dbReference type="ChEBI" id="CHEBI:30616"/>
    </ligand>
</feature>
<feature type="binding site" evidence="1">
    <location>
        <begin position="210"/>
        <end position="215"/>
    </location>
    <ligand>
        <name>ATP</name>
        <dbReference type="ChEBI" id="CHEBI:30616"/>
    </ligand>
</feature>
<evidence type="ECO:0000255" key="1">
    <source>
        <dbReference type="HAMAP-Rule" id="MF_00602"/>
    </source>
</evidence>
<reference key="1">
    <citation type="journal article" date="2010" name="Environ. Microbiol.">
        <title>The genome of Syntrophomonas wolfei: new insights into syntrophic metabolism and biohydrogen production.</title>
        <authorList>
            <person name="Sieber J.R."/>
            <person name="Sims D.R."/>
            <person name="Han C."/>
            <person name="Kim E."/>
            <person name="Lykidis A."/>
            <person name="Lapidus A.L."/>
            <person name="McDonnald E."/>
            <person name="Rohlin L."/>
            <person name="Culley D.E."/>
            <person name="Gunsalus R."/>
            <person name="McInerney M.J."/>
        </authorList>
    </citation>
    <scope>NUCLEOTIDE SEQUENCE [LARGE SCALE GENOMIC DNA]</scope>
    <source>
        <strain>DSM 2245B / Goettingen</strain>
    </source>
</reference>